<name>RIMM_STRCO</name>
<comment type="function">
    <text evidence="1">An accessory protein needed during the final step in the assembly of 30S ribosomal subunit, possibly for assembly of the head region. Essential for efficient processing of 16S rRNA. May be needed both before and after RbfA during the maturation of 16S rRNA. It has affinity for free ribosomal 30S subunits but not for 70S ribosomes.</text>
</comment>
<comment type="subunit">
    <text evidence="1">Binds ribosomal protein uS19.</text>
</comment>
<comment type="subcellular location">
    <subcellularLocation>
        <location evidence="1">Cytoplasm</location>
    </subcellularLocation>
</comment>
<comment type="domain">
    <text evidence="1">The PRC barrel domain binds ribosomal protein uS19.</text>
</comment>
<comment type="similarity">
    <text evidence="1">Belongs to the RimM family.</text>
</comment>
<feature type="chain" id="PRO_0000163362" description="Ribosome maturation factor RimM">
    <location>
        <begin position="1"/>
        <end position="188"/>
    </location>
</feature>
<feature type="domain" description="PRC barrel" evidence="1">
    <location>
        <begin position="93"/>
        <end position="166"/>
    </location>
</feature>
<keyword id="KW-0143">Chaperone</keyword>
<keyword id="KW-0963">Cytoplasm</keyword>
<keyword id="KW-1185">Reference proteome</keyword>
<keyword id="KW-0690">Ribosome biogenesis</keyword>
<keyword id="KW-0698">rRNA processing</keyword>
<protein>
    <recommendedName>
        <fullName evidence="1">Ribosome maturation factor RimM</fullName>
    </recommendedName>
</protein>
<proteinExistence type="inferred from homology"/>
<evidence type="ECO:0000255" key="1">
    <source>
        <dbReference type="HAMAP-Rule" id="MF_00014"/>
    </source>
</evidence>
<organism>
    <name type="scientific">Streptomyces coelicolor (strain ATCC BAA-471 / A3(2) / M145)</name>
    <dbReference type="NCBI Taxonomy" id="100226"/>
    <lineage>
        <taxon>Bacteria</taxon>
        <taxon>Bacillati</taxon>
        <taxon>Actinomycetota</taxon>
        <taxon>Actinomycetes</taxon>
        <taxon>Kitasatosporales</taxon>
        <taxon>Streptomycetaceae</taxon>
        <taxon>Streptomyces</taxon>
        <taxon>Streptomyces albidoflavus group</taxon>
    </lineage>
</organism>
<gene>
    <name evidence="1" type="primary">rimM</name>
    <name type="ordered locus">SCO5593</name>
    <name type="ORF">SC2E1.10</name>
</gene>
<sequence>MQLVVARIGRAHGIKGEVTVEVRTDEPELRLGPGAVLATDPASTGPLTIESGRVHSGRLLLRFAGVHDRTGAEALRNTLLIADVDPDERPEDEDEYYDHQLIDLDVVTEDGTEVGRITEISHLPTQDLFVVERPDGSEVYVPFVSEIVTGIDLDAQRAVIDPPPGLIDDRAEIASARDAGAEDAGDEA</sequence>
<accession>P0A4D3</accession>
<accession>O69881</accession>
<dbReference type="EMBL" id="AL939124">
    <property type="protein sequence ID" value="CAA19385.1"/>
    <property type="molecule type" value="Genomic_DNA"/>
</dbReference>
<dbReference type="PIR" id="T34778">
    <property type="entry name" value="T34778"/>
</dbReference>
<dbReference type="RefSeq" id="NP_629727.1">
    <property type="nucleotide sequence ID" value="NC_003888.3"/>
</dbReference>
<dbReference type="RefSeq" id="WP_003973400.1">
    <property type="nucleotide sequence ID" value="NZ_VNID01000034.1"/>
</dbReference>
<dbReference type="SMR" id="P0A4D3"/>
<dbReference type="FunCoup" id="P0A4D3">
    <property type="interactions" value="120"/>
</dbReference>
<dbReference type="STRING" id="100226.gene:17763251"/>
<dbReference type="PaxDb" id="100226-SCO5593"/>
<dbReference type="GeneID" id="91383433"/>
<dbReference type="KEGG" id="sco:SCO5593"/>
<dbReference type="PATRIC" id="fig|100226.15.peg.5685"/>
<dbReference type="eggNOG" id="COG0806">
    <property type="taxonomic scope" value="Bacteria"/>
</dbReference>
<dbReference type="HOGENOM" id="CLU_077636_0_0_11"/>
<dbReference type="InParanoid" id="P0A4D3"/>
<dbReference type="OrthoDB" id="5381335at2"/>
<dbReference type="PhylomeDB" id="P0A4D3"/>
<dbReference type="Proteomes" id="UP000001973">
    <property type="component" value="Chromosome"/>
</dbReference>
<dbReference type="GO" id="GO:0005829">
    <property type="term" value="C:cytosol"/>
    <property type="evidence" value="ECO:0000318"/>
    <property type="project" value="GO_Central"/>
</dbReference>
<dbReference type="GO" id="GO:0005840">
    <property type="term" value="C:ribosome"/>
    <property type="evidence" value="ECO:0007669"/>
    <property type="project" value="InterPro"/>
</dbReference>
<dbReference type="GO" id="GO:0043022">
    <property type="term" value="F:ribosome binding"/>
    <property type="evidence" value="ECO:0007669"/>
    <property type="project" value="InterPro"/>
</dbReference>
<dbReference type="GO" id="GO:0030490">
    <property type="term" value="P:maturation of SSU-rRNA"/>
    <property type="evidence" value="ECO:0000318"/>
    <property type="project" value="GO_Central"/>
</dbReference>
<dbReference type="Gene3D" id="2.30.30.240">
    <property type="entry name" value="PRC-barrel domain"/>
    <property type="match status" value="1"/>
</dbReference>
<dbReference type="Gene3D" id="2.40.30.60">
    <property type="entry name" value="RimM"/>
    <property type="match status" value="1"/>
</dbReference>
<dbReference type="HAMAP" id="MF_00014">
    <property type="entry name" value="Ribosome_mat_RimM"/>
    <property type="match status" value="1"/>
</dbReference>
<dbReference type="InterPro" id="IPR011033">
    <property type="entry name" value="PRC_barrel-like_sf"/>
</dbReference>
<dbReference type="InterPro" id="IPR056792">
    <property type="entry name" value="PRC_RimM"/>
</dbReference>
<dbReference type="InterPro" id="IPR011961">
    <property type="entry name" value="RimM"/>
</dbReference>
<dbReference type="InterPro" id="IPR002676">
    <property type="entry name" value="RimM_N"/>
</dbReference>
<dbReference type="InterPro" id="IPR036976">
    <property type="entry name" value="RimM_N_sf"/>
</dbReference>
<dbReference type="InterPro" id="IPR009000">
    <property type="entry name" value="Transl_B-barrel_sf"/>
</dbReference>
<dbReference type="NCBIfam" id="TIGR02273">
    <property type="entry name" value="16S_RimM"/>
    <property type="match status" value="1"/>
</dbReference>
<dbReference type="PANTHER" id="PTHR33692">
    <property type="entry name" value="RIBOSOME MATURATION FACTOR RIMM"/>
    <property type="match status" value="1"/>
</dbReference>
<dbReference type="PANTHER" id="PTHR33692:SF1">
    <property type="entry name" value="RIBOSOME MATURATION FACTOR RIMM"/>
    <property type="match status" value="1"/>
</dbReference>
<dbReference type="Pfam" id="PF24986">
    <property type="entry name" value="PRC_RimM"/>
    <property type="match status" value="1"/>
</dbReference>
<dbReference type="Pfam" id="PF01782">
    <property type="entry name" value="RimM"/>
    <property type="match status" value="1"/>
</dbReference>
<dbReference type="SUPFAM" id="SSF50346">
    <property type="entry name" value="PRC-barrel domain"/>
    <property type="match status" value="1"/>
</dbReference>
<dbReference type="SUPFAM" id="SSF50447">
    <property type="entry name" value="Translation proteins"/>
    <property type="match status" value="1"/>
</dbReference>
<reference key="1">
    <citation type="journal article" date="2002" name="Nature">
        <title>Complete genome sequence of the model actinomycete Streptomyces coelicolor A3(2).</title>
        <authorList>
            <person name="Bentley S.D."/>
            <person name="Chater K.F."/>
            <person name="Cerdeno-Tarraga A.-M."/>
            <person name="Challis G.L."/>
            <person name="Thomson N.R."/>
            <person name="James K.D."/>
            <person name="Harris D.E."/>
            <person name="Quail M.A."/>
            <person name="Kieser H."/>
            <person name="Harper D."/>
            <person name="Bateman A."/>
            <person name="Brown S."/>
            <person name="Chandra G."/>
            <person name="Chen C.W."/>
            <person name="Collins M."/>
            <person name="Cronin A."/>
            <person name="Fraser A."/>
            <person name="Goble A."/>
            <person name="Hidalgo J."/>
            <person name="Hornsby T."/>
            <person name="Howarth S."/>
            <person name="Huang C.-H."/>
            <person name="Kieser T."/>
            <person name="Larke L."/>
            <person name="Murphy L.D."/>
            <person name="Oliver K."/>
            <person name="O'Neil S."/>
            <person name="Rabbinowitsch E."/>
            <person name="Rajandream M.A."/>
            <person name="Rutherford K.M."/>
            <person name="Rutter S."/>
            <person name="Seeger K."/>
            <person name="Saunders D."/>
            <person name="Sharp S."/>
            <person name="Squares R."/>
            <person name="Squares S."/>
            <person name="Taylor K."/>
            <person name="Warren T."/>
            <person name="Wietzorrek A."/>
            <person name="Woodward J.R."/>
            <person name="Barrell B.G."/>
            <person name="Parkhill J."/>
            <person name="Hopwood D.A."/>
        </authorList>
    </citation>
    <scope>NUCLEOTIDE SEQUENCE [LARGE SCALE GENOMIC DNA]</scope>
    <source>
        <strain>ATCC BAA-471 / A3(2) / M145</strain>
    </source>
</reference>